<name>FDL33_ARATH</name>
<gene>
    <name type="ordered locus">At5g25850</name>
    <name type="ORF">F18A17.100</name>
</gene>
<organism>
    <name type="scientific">Arabidopsis thaliana</name>
    <name type="common">Mouse-ear cress</name>
    <dbReference type="NCBI Taxonomy" id="3702"/>
    <lineage>
        <taxon>Eukaryota</taxon>
        <taxon>Viridiplantae</taxon>
        <taxon>Streptophyta</taxon>
        <taxon>Embryophyta</taxon>
        <taxon>Tracheophyta</taxon>
        <taxon>Spermatophyta</taxon>
        <taxon>Magnoliopsida</taxon>
        <taxon>eudicotyledons</taxon>
        <taxon>Gunneridae</taxon>
        <taxon>Pentapetalae</taxon>
        <taxon>rosids</taxon>
        <taxon>malvids</taxon>
        <taxon>Brassicales</taxon>
        <taxon>Brassicaceae</taxon>
        <taxon>Camelineae</taxon>
        <taxon>Arabidopsis</taxon>
    </lineage>
</organism>
<reference key="1">
    <citation type="journal article" date="2000" name="Nature">
        <title>Sequence and analysis of chromosome 5 of the plant Arabidopsis thaliana.</title>
        <authorList>
            <person name="Tabata S."/>
            <person name="Kaneko T."/>
            <person name="Nakamura Y."/>
            <person name="Kotani H."/>
            <person name="Kato T."/>
            <person name="Asamizu E."/>
            <person name="Miyajima N."/>
            <person name="Sasamoto S."/>
            <person name="Kimura T."/>
            <person name="Hosouchi T."/>
            <person name="Kawashima K."/>
            <person name="Kohara M."/>
            <person name="Matsumoto M."/>
            <person name="Matsuno A."/>
            <person name="Muraki A."/>
            <person name="Nakayama S."/>
            <person name="Nakazaki N."/>
            <person name="Naruo K."/>
            <person name="Okumura S."/>
            <person name="Shinpo S."/>
            <person name="Takeuchi C."/>
            <person name="Wada T."/>
            <person name="Watanabe A."/>
            <person name="Yamada M."/>
            <person name="Yasuda M."/>
            <person name="Sato S."/>
            <person name="de la Bastide M."/>
            <person name="Huang E."/>
            <person name="Spiegel L."/>
            <person name="Gnoj L."/>
            <person name="O'Shaughnessy A."/>
            <person name="Preston R."/>
            <person name="Habermann K."/>
            <person name="Murray J."/>
            <person name="Johnson D."/>
            <person name="Rohlfing T."/>
            <person name="Nelson J."/>
            <person name="Stoneking T."/>
            <person name="Pepin K."/>
            <person name="Spieth J."/>
            <person name="Sekhon M."/>
            <person name="Armstrong J."/>
            <person name="Becker M."/>
            <person name="Belter E."/>
            <person name="Cordum H."/>
            <person name="Cordes M."/>
            <person name="Courtney L."/>
            <person name="Courtney W."/>
            <person name="Dante M."/>
            <person name="Du H."/>
            <person name="Edwards J."/>
            <person name="Fryman J."/>
            <person name="Haakensen B."/>
            <person name="Lamar E."/>
            <person name="Latreille P."/>
            <person name="Leonard S."/>
            <person name="Meyer R."/>
            <person name="Mulvaney E."/>
            <person name="Ozersky P."/>
            <person name="Riley A."/>
            <person name="Strowmatt C."/>
            <person name="Wagner-McPherson C."/>
            <person name="Wollam A."/>
            <person name="Yoakum M."/>
            <person name="Bell M."/>
            <person name="Dedhia N."/>
            <person name="Parnell L."/>
            <person name="Shah R."/>
            <person name="Rodriguez M."/>
            <person name="Hoon See L."/>
            <person name="Vil D."/>
            <person name="Baker J."/>
            <person name="Kirchoff K."/>
            <person name="Toth K."/>
            <person name="King L."/>
            <person name="Bahret A."/>
            <person name="Miller B."/>
            <person name="Marra M.A."/>
            <person name="Martienssen R."/>
            <person name="McCombie W.R."/>
            <person name="Wilson R.K."/>
            <person name="Murphy G."/>
            <person name="Bancroft I."/>
            <person name="Volckaert G."/>
            <person name="Wambutt R."/>
            <person name="Duesterhoeft A."/>
            <person name="Stiekema W."/>
            <person name="Pohl T."/>
            <person name="Entian K.-D."/>
            <person name="Terryn N."/>
            <person name="Hartley N."/>
            <person name="Bent E."/>
            <person name="Johnson S."/>
            <person name="Langham S.-A."/>
            <person name="McCullagh B."/>
            <person name="Robben J."/>
            <person name="Grymonprez B."/>
            <person name="Zimmermann W."/>
            <person name="Ramsperger U."/>
            <person name="Wedler H."/>
            <person name="Balke K."/>
            <person name="Wedler E."/>
            <person name="Peters S."/>
            <person name="van Staveren M."/>
            <person name="Dirkse W."/>
            <person name="Mooijman P."/>
            <person name="Klein Lankhorst R."/>
            <person name="Weitzenegger T."/>
            <person name="Bothe G."/>
            <person name="Rose M."/>
            <person name="Hauf J."/>
            <person name="Berneiser S."/>
            <person name="Hempel S."/>
            <person name="Feldpausch M."/>
            <person name="Lamberth S."/>
            <person name="Villarroel R."/>
            <person name="Gielen J."/>
            <person name="Ardiles W."/>
            <person name="Bents O."/>
            <person name="Lemcke K."/>
            <person name="Kolesov G."/>
            <person name="Mayer K.F.X."/>
            <person name="Rudd S."/>
            <person name="Schoof H."/>
            <person name="Schueller C."/>
            <person name="Zaccaria P."/>
            <person name="Mewes H.-W."/>
            <person name="Bevan M."/>
            <person name="Fransz P.F."/>
        </authorList>
    </citation>
    <scope>NUCLEOTIDE SEQUENCE [LARGE SCALE GENOMIC DNA]</scope>
    <source>
        <strain>cv. Columbia</strain>
    </source>
</reference>
<reference key="2">
    <citation type="journal article" date="2017" name="Plant J.">
        <title>Araport11: a complete reannotation of the Arabidopsis thaliana reference genome.</title>
        <authorList>
            <person name="Cheng C.Y."/>
            <person name="Krishnakumar V."/>
            <person name="Chan A.P."/>
            <person name="Thibaud-Nissen F."/>
            <person name="Schobel S."/>
            <person name="Town C.D."/>
        </authorList>
    </citation>
    <scope>GENOME REANNOTATION</scope>
    <source>
        <strain>cv. Columbia</strain>
    </source>
</reference>
<dbReference type="EMBL" id="AC005405">
    <property type="status" value="NOT_ANNOTATED_CDS"/>
    <property type="molecule type" value="Genomic_DNA"/>
</dbReference>
<dbReference type="EMBL" id="CP002688">
    <property type="protein sequence ID" value="AED93494.1"/>
    <property type="molecule type" value="Genomic_DNA"/>
</dbReference>
<dbReference type="RefSeq" id="NP_197957.1">
    <property type="nucleotide sequence ID" value="NM_122486.1"/>
</dbReference>
<dbReference type="FunCoup" id="Q3E944">
    <property type="interactions" value="2"/>
</dbReference>
<dbReference type="PaxDb" id="3702-AT5G25850.1"/>
<dbReference type="EnsemblPlants" id="AT5G25850.1">
    <property type="protein sequence ID" value="AT5G25850.1"/>
    <property type="gene ID" value="AT5G25850"/>
</dbReference>
<dbReference type="GeneID" id="832654"/>
<dbReference type="Gramene" id="AT5G25850.1">
    <property type="protein sequence ID" value="AT5G25850.1"/>
    <property type="gene ID" value="AT5G25850"/>
</dbReference>
<dbReference type="KEGG" id="ath:AT5G25850"/>
<dbReference type="Araport" id="AT5G25850"/>
<dbReference type="TAIR" id="AT5G25850"/>
<dbReference type="HOGENOM" id="CLU_010721_1_3_1"/>
<dbReference type="InParanoid" id="Q3E944"/>
<dbReference type="OMA" id="CASILQW"/>
<dbReference type="PhylomeDB" id="Q3E944"/>
<dbReference type="PRO" id="PR:Q3E944"/>
<dbReference type="Proteomes" id="UP000006548">
    <property type="component" value="Chromosome 5"/>
</dbReference>
<dbReference type="ExpressionAtlas" id="Q3E944">
    <property type="expression patterns" value="baseline"/>
</dbReference>
<dbReference type="CDD" id="cd22160">
    <property type="entry name" value="F-box_AtFBL13-like"/>
    <property type="match status" value="1"/>
</dbReference>
<dbReference type="Gene3D" id="3.80.10.10">
    <property type="entry name" value="Ribonuclease Inhibitor"/>
    <property type="match status" value="1"/>
</dbReference>
<dbReference type="InterPro" id="IPR036047">
    <property type="entry name" value="F-box-like_dom_sf"/>
</dbReference>
<dbReference type="InterPro" id="IPR053781">
    <property type="entry name" value="F-box_AtFBL13-like"/>
</dbReference>
<dbReference type="InterPro" id="IPR001810">
    <property type="entry name" value="F-box_dom"/>
</dbReference>
<dbReference type="InterPro" id="IPR006566">
    <property type="entry name" value="FBD"/>
</dbReference>
<dbReference type="InterPro" id="IPR050232">
    <property type="entry name" value="FBL13/AtMIF1-like"/>
</dbReference>
<dbReference type="InterPro" id="IPR032675">
    <property type="entry name" value="LRR_dom_sf"/>
</dbReference>
<dbReference type="InterPro" id="IPR055411">
    <property type="entry name" value="LRR_FXL15/At3g58940/PEG3-like"/>
</dbReference>
<dbReference type="PANTHER" id="PTHR31900">
    <property type="entry name" value="F-BOX/RNI SUPERFAMILY PROTEIN-RELATED"/>
    <property type="match status" value="1"/>
</dbReference>
<dbReference type="PANTHER" id="PTHR31900:SF25">
    <property type="entry name" value="FBD DOMAIN-CONTAINING PROTEIN"/>
    <property type="match status" value="1"/>
</dbReference>
<dbReference type="Pfam" id="PF00646">
    <property type="entry name" value="F-box"/>
    <property type="match status" value="1"/>
</dbReference>
<dbReference type="Pfam" id="PF08387">
    <property type="entry name" value="FBD"/>
    <property type="match status" value="1"/>
</dbReference>
<dbReference type="Pfam" id="PF24758">
    <property type="entry name" value="LRR_At5g56370"/>
    <property type="match status" value="1"/>
</dbReference>
<dbReference type="SMART" id="SM00579">
    <property type="entry name" value="FBD"/>
    <property type="match status" value="1"/>
</dbReference>
<dbReference type="SUPFAM" id="SSF81383">
    <property type="entry name" value="F-box domain"/>
    <property type="match status" value="1"/>
</dbReference>
<dbReference type="SUPFAM" id="SSF52047">
    <property type="entry name" value="RNI-like"/>
    <property type="match status" value="1"/>
</dbReference>
<proteinExistence type="predicted"/>
<keyword id="KW-0433">Leucine-rich repeat</keyword>
<keyword id="KW-1185">Reference proteome</keyword>
<keyword id="KW-0677">Repeat</keyword>
<sequence length="481" mass="56119">MMGRKNSKQVRYSNRLILINRLSQLSDPLICQILSHLPIKEVVTTSVLSTRWKNIWLSVPSLELIYSIFPNFNTFRSFGDRFFDSTRVSCIHNLKLYFDEHDACYLTSWINAFVTRNIRRLYVRRVRGNYFHELPLSLYVCETLVSLKLFHLTLVDPEFVSLPCLKIMHLNYVWFPNDATFERLVSSCPVLEDLKIDVLWNDGRVYRVKSRSLKRLRLLRSSTMVFDSVPGVVIDAPLICYLRINDRVSETYILNDLESNAKLDIHLDFGSEDFGEPSVSSRRSRIRSFLPAISKVMGLKISENTFKVIHHYSNLAQLPQFDNTSRLHVTLRVSELKWLPNFLECCPNLKSLIVAFNGDFEKMGSEEMNQISFLLRMKRIVDMTIFMYTSKVLLHSDNINQLSFSSVPKCLLSSLQFVELNAQILRFDGEILNLAKYFLENSSILQKLTLHPNKYGSTYANMLHKFRRRSRTCQFILTDLE</sequence>
<accession>Q3E944</accession>
<feature type="chain" id="PRO_0000283125" description="Putative F-box/FBD/LRR-repeat protein At5g25850">
    <location>
        <begin position="1"/>
        <end position="481"/>
    </location>
</feature>
<feature type="domain" description="F-box">
    <location>
        <begin position="19"/>
        <end position="69"/>
    </location>
</feature>
<feature type="repeat" description="LRR 1">
    <location>
        <begin position="123"/>
        <end position="151"/>
    </location>
</feature>
<feature type="repeat" description="LRR 2">
    <location>
        <begin position="173"/>
        <end position="198"/>
    </location>
</feature>
<feature type="repeat" description="LRR 3">
    <location>
        <begin position="328"/>
        <end position="356"/>
    </location>
</feature>
<feature type="domain" description="FBD">
    <location>
        <begin position="401"/>
        <end position="452"/>
    </location>
</feature>
<protein>
    <recommendedName>
        <fullName>Putative F-box/FBD/LRR-repeat protein At5g25850</fullName>
    </recommendedName>
</protein>